<gene>
    <name evidence="1" type="primary">hisA</name>
    <name type="ordered locus">VSAL_I1138</name>
</gene>
<sequence length="245" mass="26460">MIIPALDLIEGQVVRLFQGDYGQVTEYKVDPAEQFNLYHQAGANWLHLVDLTGAKDTTARQLDLIARLLASTPANIQIGGGVRNEADVQDLLNAGAQRVVIGSTAVKQPELVKGWMEKYGAEKIVLALDINIDENGTRNVAISGWQEDSGVTIEALLEDYLTVGLKHVLCTDISRDGTLQGSNVELYVDLCKQYPQVQFQSSGGIGSLDDIVALKGSGVAGVIVGRALLDGKFTAEEAFQCWQSE</sequence>
<proteinExistence type="inferred from homology"/>
<comment type="catalytic activity">
    <reaction evidence="1">
        <text>1-(5-phospho-beta-D-ribosyl)-5-[(5-phospho-beta-D-ribosylamino)methylideneamino]imidazole-4-carboxamide = 5-[(5-phospho-1-deoxy-D-ribulos-1-ylimino)methylamino]-1-(5-phospho-beta-D-ribosyl)imidazole-4-carboxamide</text>
        <dbReference type="Rhea" id="RHEA:15469"/>
        <dbReference type="ChEBI" id="CHEBI:58435"/>
        <dbReference type="ChEBI" id="CHEBI:58525"/>
        <dbReference type="EC" id="5.3.1.16"/>
    </reaction>
</comment>
<comment type="pathway">
    <text evidence="1">Amino-acid biosynthesis; L-histidine biosynthesis; L-histidine from 5-phospho-alpha-D-ribose 1-diphosphate: step 4/9.</text>
</comment>
<comment type="subcellular location">
    <subcellularLocation>
        <location evidence="1">Cytoplasm</location>
    </subcellularLocation>
</comment>
<comment type="similarity">
    <text evidence="1">Belongs to the HisA/HisF family.</text>
</comment>
<feature type="chain" id="PRO_1000135074" description="1-(5-phosphoribosyl)-5-[(5-phosphoribosylamino)methylideneamino] imidazole-4-carboxamide isomerase">
    <location>
        <begin position="1"/>
        <end position="245"/>
    </location>
</feature>
<feature type="active site" description="Proton acceptor" evidence="1">
    <location>
        <position position="7"/>
    </location>
</feature>
<feature type="active site" description="Proton donor" evidence="1">
    <location>
        <position position="129"/>
    </location>
</feature>
<keyword id="KW-0028">Amino-acid biosynthesis</keyword>
<keyword id="KW-0963">Cytoplasm</keyword>
<keyword id="KW-0368">Histidine biosynthesis</keyword>
<keyword id="KW-0413">Isomerase</keyword>
<protein>
    <recommendedName>
        <fullName evidence="1">1-(5-phosphoribosyl)-5-[(5-phosphoribosylamino)methylideneamino] imidazole-4-carboxamide isomerase</fullName>
        <ecNumber evidence="1">5.3.1.16</ecNumber>
    </recommendedName>
    <alternativeName>
        <fullName evidence="1">Phosphoribosylformimino-5-aminoimidazole carboxamide ribotide isomerase</fullName>
    </alternativeName>
</protein>
<organism>
    <name type="scientific">Aliivibrio salmonicida (strain LFI1238)</name>
    <name type="common">Vibrio salmonicida (strain LFI1238)</name>
    <dbReference type="NCBI Taxonomy" id="316275"/>
    <lineage>
        <taxon>Bacteria</taxon>
        <taxon>Pseudomonadati</taxon>
        <taxon>Pseudomonadota</taxon>
        <taxon>Gammaproteobacteria</taxon>
        <taxon>Vibrionales</taxon>
        <taxon>Vibrionaceae</taxon>
        <taxon>Aliivibrio</taxon>
    </lineage>
</organism>
<accession>B6EJ92</accession>
<reference key="1">
    <citation type="journal article" date="2008" name="BMC Genomics">
        <title>The genome sequence of the fish pathogen Aliivibrio salmonicida strain LFI1238 shows extensive evidence of gene decay.</title>
        <authorList>
            <person name="Hjerde E."/>
            <person name="Lorentzen M.S."/>
            <person name="Holden M.T."/>
            <person name="Seeger K."/>
            <person name="Paulsen S."/>
            <person name="Bason N."/>
            <person name="Churcher C."/>
            <person name="Harris D."/>
            <person name="Norbertczak H."/>
            <person name="Quail M.A."/>
            <person name="Sanders S."/>
            <person name="Thurston S."/>
            <person name="Parkhill J."/>
            <person name="Willassen N.P."/>
            <person name="Thomson N.R."/>
        </authorList>
    </citation>
    <scope>NUCLEOTIDE SEQUENCE [LARGE SCALE GENOMIC DNA]</scope>
    <source>
        <strain>LFI1238</strain>
    </source>
</reference>
<evidence type="ECO:0000255" key="1">
    <source>
        <dbReference type="HAMAP-Rule" id="MF_01014"/>
    </source>
</evidence>
<name>HIS4_ALISL</name>
<dbReference type="EC" id="5.3.1.16" evidence="1"/>
<dbReference type="EMBL" id="FM178379">
    <property type="protein sequence ID" value="CAQ78823.1"/>
    <property type="molecule type" value="Genomic_DNA"/>
</dbReference>
<dbReference type="RefSeq" id="WP_012549883.1">
    <property type="nucleotide sequence ID" value="NC_011312.1"/>
</dbReference>
<dbReference type="SMR" id="B6EJ92"/>
<dbReference type="KEGG" id="vsa:VSAL_I1138"/>
<dbReference type="eggNOG" id="COG0106">
    <property type="taxonomic scope" value="Bacteria"/>
</dbReference>
<dbReference type="HOGENOM" id="CLU_048577_1_2_6"/>
<dbReference type="UniPathway" id="UPA00031">
    <property type="reaction ID" value="UER00009"/>
</dbReference>
<dbReference type="Proteomes" id="UP000001730">
    <property type="component" value="Chromosome 1"/>
</dbReference>
<dbReference type="GO" id="GO:0005737">
    <property type="term" value="C:cytoplasm"/>
    <property type="evidence" value="ECO:0007669"/>
    <property type="project" value="UniProtKB-SubCell"/>
</dbReference>
<dbReference type="GO" id="GO:0003949">
    <property type="term" value="F:1-(5-phosphoribosyl)-5-[(5-phosphoribosylamino)methylideneamino]imidazole-4-carboxamide isomerase activity"/>
    <property type="evidence" value="ECO:0007669"/>
    <property type="project" value="UniProtKB-UniRule"/>
</dbReference>
<dbReference type="GO" id="GO:0000105">
    <property type="term" value="P:L-histidine biosynthetic process"/>
    <property type="evidence" value="ECO:0007669"/>
    <property type="project" value="UniProtKB-UniRule"/>
</dbReference>
<dbReference type="GO" id="GO:0000162">
    <property type="term" value="P:L-tryptophan biosynthetic process"/>
    <property type="evidence" value="ECO:0007669"/>
    <property type="project" value="TreeGrafter"/>
</dbReference>
<dbReference type="CDD" id="cd04732">
    <property type="entry name" value="HisA"/>
    <property type="match status" value="1"/>
</dbReference>
<dbReference type="FunFam" id="3.20.20.70:FF:000009">
    <property type="entry name" value="1-(5-phosphoribosyl)-5-[(5-phosphoribosylamino)methylideneamino] imidazole-4-carboxamide isomerase"/>
    <property type="match status" value="1"/>
</dbReference>
<dbReference type="Gene3D" id="3.20.20.70">
    <property type="entry name" value="Aldolase class I"/>
    <property type="match status" value="1"/>
</dbReference>
<dbReference type="HAMAP" id="MF_01014">
    <property type="entry name" value="HisA"/>
    <property type="match status" value="1"/>
</dbReference>
<dbReference type="InterPro" id="IPR013785">
    <property type="entry name" value="Aldolase_TIM"/>
</dbReference>
<dbReference type="InterPro" id="IPR006062">
    <property type="entry name" value="His_biosynth"/>
</dbReference>
<dbReference type="InterPro" id="IPR006063">
    <property type="entry name" value="HisA_bact_arch"/>
</dbReference>
<dbReference type="InterPro" id="IPR044524">
    <property type="entry name" value="Isoase_HisA-like"/>
</dbReference>
<dbReference type="InterPro" id="IPR023016">
    <property type="entry name" value="Isoase_HisA-like_bact"/>
</dbReference>
<dbReference type="InterPro" id="IPR011060">
    <property type="entry name" value="RibuloseP-bd_barrel"/>
</dbReference>
<dbReference type="NCBIfam" id="TIGR00007">
    <property type="entry name" value="1-(5-phosphoribosyl)-5-[(5-phosphoribosylamino)methylideneamino]imidazole-4-carboxamide isomerase"/>
    <property type="match status" value="1"/>
</dbReference>
<dbReference type="PANTHER" id="PTHR43090">
    <property type="entry name" value="1-(5-PHOSPHORIBOSYL)-5-[(5-PHOSPHORIBOSYLAMINO)METHYLIDENEAMINO] IMIDAZOLE-4-CARBOXAMIDE ISOMERASE"/>
    <property type="match status" value="1"/>
</dbReference>
<dbReference type="PANTHER" id="PTHR43090:SF2">
    <property type="entry name" value="1-(5-PHOSPHORIBOSYL)-5-[(5-PHOSPHORIBOSYLAMINO)METHYLIDENEAMINO] IMIDAZOLE-4-CARBOXAMIDE ISOMERASE"/>
    <property type="match status" value="1"/>
</dbReference>
<dbReference type="Pfam" id="PF00977">
    <property type="entry name" value="His_biosynth"/>
    <property type="match status" value="1"/>
</dbReference>
<dbReference type="SUPFAM" id="SSF51366">
    <property type="entry name" value="Ribulose-phoshate binding barrel"/>
    <property type="match status" value="1"/>
</dbReference>